<protein>
    <recommendedName>
        <fullName evidence="7">Midkine-B</fullName>
        <shortName>MK-B</shortName>
    </recommendedName>
    <alternativeName>
        <fullName evidence="6">Pleiotrophic factor-alpha-2</fullName>
        <shortName>PTF-alpha-2</shortName>
        <shortName>X-PTF-alpha2</shortName>
    </alternativeName>
</protein>
<feature type="signal peptide" evidence="4">
    <location>
        <begin position="1"/>
        <end position="20"/>
    </location>
</feature>
<feature type="chain" id="PRO_0000024667" description="Midkine-B">
    <location>
        <begin position="21"/>
        <end position="142"/>
    </location>
</feature>
<feature type="disulfide bond" evidence="1">
    <location>
        <begin position="36"/>
        <end position="60"/>
    </location>
</feature>
<feature type="disulfide bond" evidence="1">
    <location>
        <begin position="44"/>
        <end position="69"/>
    </location>
</feature>
<feature type="disulfide bond" evidence="1">
    <location>
        <begin position="51"/>
        <end position="73"/>
    </location>
</feature>
<feature type="disulfide bond" evidence="1">
    <location>
        <begin position="83"/>
        <end position="115"/>
    </location>
</feature>
<feature type="disulfide bond" evidence="1">
    <location>
        <begin position="93"/>
        <end position="125"/>
    </location>
</feature>
<evidence type="ECO:0000250" key="1"/>
<evidence type="ECO:0000250" key="2">
    <source>
        <dbReference type="UniProtKB" id="P21741"/>
    </source>
</evidence>
<evidence type="ECO:0000250" key="3">
    <source>
        <dbReference type="UniProtKB" id="P48530"/>
    </source>
</evidence>
<evidence type="ECO:0000255" key="4"/>
<evidence type="ECO:0000269" key="5">
    <source>
    </source>
</evidence>
<evidence type="ECO:0000303" key="6">
    <source>
    </source>
</evidence>
<evidence type="ECO:0000305" key="7"/>
<keyword id="KW-0044">Antibiotic</keyword>
<keyword id="KW-0929">Antimicrobial</keyword>
<keyword id="KW-0217">Developmental protein</keyword>
<keyword id="KW-1015">Disulfide bond</keyword>
<keyword id="KW-0339">Growth factor</keyword>
<keyword id="KW-0358">Heparin-binding</keyword>
<keyword id="KW-0497">Mitogen</keyword>
<keyword id="KW-1185">Reference proteome</keyword>
<keyword id="KW-0964">Secreted</keyword>
<keyword id="KW-0732">Signal</keyword>
<reference key="1">
    <citation type="journal article" date="1995" name="Biochem. Biophys. Res. Commun.">
        <title>Developmental and differential regulations in gene expression of Xenopus pleiotrophic factors-alpha and -beta.</title>
        <authorList>
            <person name="Tsujimura A."/>
            <person name="Yasojima K."/>
            <person name="Kuboki Y."/>
            <person name="Suzuki A."/>
            <person name="Ueno N."/>
            <person name="Shiokawa K."/>
            <person name="Hashimoto-Gotoh T."/>
        </authorList>
    </citation>
    <scope>NUCLEOTIDE SEQUENCE [MRNA]</scope>
    <scope>TISSUE SPECIFICITY</scope>
    <source>
        <tissue>Brain</tissue>
    </source>
</reference>
<reference key="2">
    <citation type="submission" date="2004-06" db="EMBL/GenBank/DDBJ databases">
        <authorList>
            <consortium name="NIH - Xenopus Gene Collection (XGC) project"/>
        </authorList>
    </citation>
    <scope>NUCLEOTIDE SEQUENCE [LARGE SCALE MRNA]</scope>
    <source>
        <tissue>Ovary</tissue>
    </source>
</reference>
<comment type="function">
    <text evidence="2 3">Secreted protein that functions as a cytokine and growth factor and mediates its signal through cell-surface proteoglycan and non-proteoglycan receptors. Binds cell-surface proteoglycan receptors via their chondroitin sulfate (CS) groups. Thereby regulates many processes like inflammatory response, cell proliferation, cell adhesion, cell growth, cell survival, tissue regeneration, cell differentiation and cell migration (By similarity). Inhibits mesoderm formation and promotes neural formation during development. Plays a role in development of the neuromuscular junction (NMJ). Has antibacterial activity against both Gram-positive and Gram-negative bacteria (By similarity).</text>
</comment>
<comment type="subcellular location">
    <subcellularLocation>
        <location evidence="1">Secreted</location>
    </subcellularLocation>
</comment>
<comment type="tissue specificity">
    <text evidence="5">In adults, expression is highest in the brain, eye and bone, with lower expression in the heart and lung. Not expressed in the ovary. In the tailbud stage embryo, expressed in the head and tail regions as well as in the central nervous system (CNS).</text>
</comment>
<comment type="similarity">
    <text evidence="7">Belongs to the pleiotrophin family.</text>
</comment>
<gene>
    <name type="primary">mdk-b</name>
</gene>
<accession>P48531</accession>
<accession>Q6GQG8</accession>
<dbReference type="EMBL" id="D42057">
    <property type="protein sequence ID" value="BAA07657.1"/>
    <property type="molecule type" value="mRNA"/>
</dbReference>
<dbReference type="EMBL" id="BC072776">
    <property type="protein sequence ID" value="AAH72776.1"/>
    <property type="molecule type" value="mRNA"/>
</dbReference>
<dbReference type="PIR" id="JC4273">
    <property type="entry name" value="JC4273"/>
</dbReference>
<dbReference type="RefSeq" id="NP_001084019.1">
    <property type="nucleotide sequence ID" value="NM_001090550.1"/>
</dbReference>
<dbReference type="RefSeq" id="XP_018112064.1">
    <property type="nucleotide sequence ID" value="XM_018256575.1"/>
</dbReference>
<dbReference type="RefSeq" id="XP_018112065.1">
    <property type="nucleotide sequence ID" value="XM_018256576.1"/>
</dbReference>
<dbReference type="SMR" id="P48531"/>
<dbReference type="DNASU" id="399256"/>
<dbReference type="GeneID" id="399256"/>
<dbReference type="KEGG" id="xla:399256"/>
<dbReference type="AGR" id="Xenbase:XB-GENE-6254190"/>
<dbReference type="CTD" id="399256"/>
<dbReference type="Xenbase" id="XB-GENE-6254190">
    <property type="gene designation" value="mdk.L"/>
</dbReference>
<dbReference type="OMA" id="WSECAEW"/>
<dbReference type="OrthoDB" id="8818336at2759"/>
<dbReference type="Proteomes" id="UP000186698">
    <property type="component" value="Chromosome 4L"/>
</dbReference>
<dbReference type="Bgee" id="399256">
    <property type="expression patterns" value="Expressed in internal ear and 19 other cell types or tissues"/>
</dbReference>
<dbReference type="GO" id="GO:0005576">
    <property type="term" value="C:extracellular region"/>
    <property type="evidence" value="ECO:0007669"/>
    <property type="project" value="UniProtKB-SubCell"/>
</dbReference>
<dbReference type="GO" id="GO:0008083">
    <property type="term" value="F:growth factor activity"/>
    <property type="evidence" value="ECO:0000318"/>
    <property type="project" value="GO_Central"/>
</dbReference>
<dbReference type="GO" id="GO:0043395">
    <property type="term" value="F:heparan sulfate proteoglycan binding"/>
    <property type="evidence" value="ECO:0000250"/>
    <property type="project" value="UniProtKB"/>
</dbReference>
<dbReference type="GO" id="GO:0008201">
    <property type="term" value="F:heparin binding"/>
    <property type="evidence" value="ECO:0000250"/>
    <property type="project" value="UniProtKB"/>
</dbReference>
<dbReference type="GO" id="GO:0042742">
    <property type="term" value="P:defense response to bacterium"/>
    <property type="evidence" value="ECO:0007669"/>
    <property type="project" value="UniProtKB-KW"/>
</dbReference>
<dbReference type="GO" id="GO:0007399">
    <property type="term" value="P:nervous system development"/>
    <property type="evidence" value="ECO:0000250"/>
    <property type="project" value="UniProtKB"/>
</dbReference>
<dbReference type="GO" id="GO:0007528">
    <property type="term" value="P:neuromuscular junction development"/>
    <property type="evidence" value="ECO:0000250"/>
    <property type="project" value="UniProtKB"/>
</dbReference>
<dbReference type="GO" id="GO:0051781">
    <property type="term" value="P:positive regulation of cell division"/>
    <property type="evidence" value="ECO:0007669"/>
    <property type="project" value="UniProtKB-KW"/>
</dbReference>
<dbReference type="GO" id="GO:0009617">
    <property type="term" value="P:response to bacterium"/>
    <property type="evidence" value="ECO:0000250"/>
    <property type="project" value="UniProtKB"/>
</dbReference>
<dbReference type="FunFam" id="2.20.60.10:FF:000002">
    <property type="entry name" value="Midkine a"/>
    <property type="match status" value="1"/>
</dbReference>
<dbReference type="FunFam" id="2.30.90.10:FF:000001">
    <property type="entry name" value="Pleiotrophin"/>
    <property type="match status" value="1"/>
</dbReference>
<dbReference type="Gene3D" id="2.30.90.10">
    <property type="entry name" value="Heparin-binding Growth Factor, Midkine, Chain A- C-terminal Domain"/>
    <property type="match status" value="1"/>
</dbReference>
<dbReference type="Gene3D" id="2.20.60.10">
    <property type="entry name" value="Pleiotrophin/Midkine, N-terminal domain"/>
    <property type="match status" value="1"/>
</dbReference>
<dbReference type="InterPro" id="IPR000762">
    <property type="entry name" value="Midkine_heparin-bd_GF"/>
</dbReference>
<dbReference type="InterPro" id="IPR020090">
    <property type="entry name" value="PTN/MK_C_dom"/>
</dbReference>
<dbReference type="InterPro" id="IPR038130">
    <property type="entry name" value="PTN/MK_C_dom_sf"/>
</dbReference>
<dbReference type="InterPro" id="IPR020091">
    <property type="entry name" value="PTN/MK_diS_sf"/>
</dbReference>
<dbReference type="InterPro" id="IPR020089">
    <property type="entry name" value="PTN/MK_N_dom"/>
</dbReference>
<dbReference type="InterPro" id="IPR037122">
    <property type="entry name" value="PTN/MK_N_dom_sf"/>
</dbReference>
<dbReference type="InterPro" id="IPR020092">
    <property type="entry name" value="PTN_MK_heparin-bd_GF_CS"/>
</dbReference>
<dbReference type="PANTHER" id="PTHR13850:SF2">
    <property type="entry name" value="MIDKINE"/>
    <property type="match status" value="1"/>
</dbReference>
<dbReference type="PANTHER" id="PTHR13850">
    <property type="entry name" value="PLEIOTROPHIN FAMILY MEMBER"/>
    <property type="match status" value="1"/>
</dbReference>
<dbReference type="Pfam" id="PF01091">
    <property type="entry name" value="PTN_MK_C"/>
    <property type="match status" value="1"/>
</dbReference>
<dbReference type="Pfam" id="PF05196">
    <property type="entry name" value="PTN_MK_N"/>
    <property type="match status" value="1"/>
</dbReference>
<dbReference type="PRINTS" id="PR00269">
    <property type="entry name" value="PTNMIDKINE"/>
</dbReference>
<dbReference type="SMART" id="SM00193">
    <property type="entry name" value="PTN"/>
    <property type="match status" value="1"/>
</dbReference>
<dbReference type="SUPFAM" id="SSF57288">
    <property type="entry name" value="Midkine"/>
    <property type="match status" value="2"/>
</dbReference>
<dbReference type="PROSITE" id="PS00619">
    <property type="entry name" value="PTN_MK_1"/>
    <property type="match status" value="1"/>
</dbReference>
<dbReference type="PROSITE" id="PS00620">
    <property type="entry name" value="PTN_MK_2"/>
    <property type="match status" value="1"/>
</dbReference>
<name>MKB_XENLA</name>
<organism>
    <name type="scientific">Xenopus laevis</name>
    <name type="common">African clawed frog</name>
    <dbReference type="NCBI Taxonomy" id="8355"/>
    <lineage>
        <taxon>Eukaryota</taxon>
        <taxon>Metazoa</taxon>
        <taxon>Chordata</taxon>
        <taxon>Craniata</taxon>
        <taxon>Vertebrata</taxon>
        <taxon>Euteleostomi</taxon>
        <taxon>Amphibia</taxon>
        <taxon>Batrachia</taxon>
        <taxon>Anura</taxon>
        <taxon>Pipoidea</taxon>
        <taxon>Pipidae</taxon>
        <taxon>Xenopodinae</taxon>
        <taxon>Xenopus</taxon>
        <taxon>Xenopus</taxon>
    </lineage>
</organism>
<proteinExistence type="evidence at transcript level"/>
<sequence length="142" mass="15595">MELRAFCVILLITILAVSSQAAKNKKEKGKKGASDCTEWTWGSCIPNSKDCGAGTREGTCKEETRKLKCKIPCNWKKDFGADCKYKFENWGECNATTGQKVRSGTLKKALYNADCQQTVEAAKPCSLKTKSKSKGKKGKGKE</sequence>